<organism>
    <name type="scientific">Teredinibacter turnerae (strain ATCC 39867 / T7901)</name>
    <dbReference type="NCBI Taxonomy" id="377629"/>
    <lineage>
        <taxon>Bacteria</taxon>
        <taxon>Pseudomonadati</taxon>
        <taxon>Pseudomonadota</taxon>
        <taxon>Gammaproteobacteria</taxon>
        <taxon>Cellvibrionales</taxon>
        <taxon>Cellvibrionaceae</taxon>
        <taxon>Teredinibacter</taxon>
    </lineage>
</organism>
<comment type="function">
    <text evidence="1">Can catalyze the hydrolysis of ATP in the presence of single-stranded DNA, the ATP-dependent uptake of single-stranded DNA by duplex DNA, and the ATP-dependent hybridization of homologous single-stranded DNAs. It interacts with LexA causing its activation and leading to its autocatalytic cleavage.</text>
</comment>
<comment type="subcellular location">
    <subcellularLocation>
        <location evidence="1">Cytoplasm</location>
    </subcellularLocation>
</comment>
<comment type="similarity">
    <text evidence="1">Belongs to the RecA family.</text>
</comment>
<accession>C5BMR1</accession>
<protein>
    <recommendedName>
        <fullName evidence="1">Protein RecA</fullName>
    </recommendedName>
    <alternativeName>
        <fullName evidence="1">Recombinase A</fullName>
    </alternativeName>
</protein>
<proteinExistence type="inferred from homology"/>
<gene>
    <name evidence="1" type="primary">recA</name>
    <name type="ordered locus">TERTU_2823</name>
</gene>
<dbReference type="EMBL" id="CP001614">
    <property type="protein sequence ID" value="ACR12059.1"/>
    <property type="molecule type" value="Genomic_DNA"/>
</dbReference>
<dbReference type="RefSeq" id="WP_015818171.1">
    <property type="nucleotide sequence ID" value="NC_012997.1"/>
</dbReference>
<dbReference type="SMR" id="C5BMR1"/>
<dbReference type="STRING" id="377629.TERTU_2823"/>
<dbReference type="KEGG" id="ttu:TERTU_2823"/>
<dbReference type="eggNOG" id="COG0468">
    <property type="taxonomic scope" value="Bacteria"/>
</dbReference>
<dbReference type="HOGENOM" id="CLU_040469_3_2_6"/>
<dbReference type="OrthoDB" id="9776733at2"/>
<dbReference type="Proteomes" id="UP000009080">
    <property type="component" value="Chromosome"/>
</dbReference>
<dbReference type="GO" id="GO:0005829">
    <property type="term" value="C:cytosol"/>
    <property type="evidence" value="ECO:0007669"/>
    <property type="project" value="TreeGrafter"/>
</dbReference>
<dbReference type="GO" id="GO:0005524">
    <property type="term" value="F:ATP binding"/>
    <property type="evidence" value="ECO:0007669"/>
    <property type="project" value="UniProtKB-UniRule"/>
</dbReference>
<dbReference type="GO" id="GO:0016887">
    <property type="term" value="F:ATP hydrolysis activity"/>
    <property type="evidence" value="ECO:0007669"/>
    <property type="project" value="InterPro"/>
</dbReference>
<dbReference type="GO" id="GO:0140664">
    <property type="term" value="F:ATP-dependent DNA damage sensor activity"/>
    <property type="evidence" value="ECO:0007669"/>
    <property type="project" value="InterPro"/>
</dbReference>
<dbReference type="GO" id="GO:0003684">
    <property type="term" value="F:damaged DNA binding"/>
    <property type="evidence" value="ECO:0007669"/>
    <property type="project" value="UniProtKB-UniRule"/>
</dbReference>
<dbReference type="GO" id="GO:0003697">
    <property type="term" value="F:single-stranded DNA binding"/>
    <property type="evidence" value="ECO:0007669"/>
    <property type="project" value="UniProtKB-UniRule"/>
</dbReference>
<dbReference type="GO" id="GO:0006310">
    <property type="term" value="P:DNA recombination"/>
    <property type="evidence" value="ECO:0007669"/>
    <property type="project" value="UniProtKB-UniRule"/>
</dbReference>
<dbReference type="GO" id="GO:0006281">
    <property type="term" value="P:DNA repair"/>
    <property type="evidence" value="ECO:0007669"/>
    <property type="project" value="UniProtKB-UniRule"/>
</dbReference>
<dbReference type="GO" id="GO:0009432">
    <property type="term" value="P:SOS response"/>
    <property type="evidence" value="ECO:0007669"/>
    <property type="project" value="UniProtKB-UniRule"/>
</dbReference>
<dbReference type="CDD" id="cd00983">
    <property type="entry name" value="RecA"/>
    <property type="match status" value="1"/>
</dbReference>
<dbReference type="FunFam" id="3.40.50.300:FF:000087">
    <property type="entry name" value="Recombinase RecA"/>
    <property type="match status" value="1"/>
</dbReference>
<dbReference type="Gene3D" id="3.40.50.300">
    <property type="entry name" value="P-loop containing nucleotide triphosphate hydrolases"/>
    <property type="match status" value="1"/>
</dbReference>
<dbReference type="HAMAP" id="MF_00268">
    <property type="entry name" value="RecA"/>
    <property type="match status" value="1"/>
</dbReference>
<dbReference type="InterPro" id="IPR003593">
    <property type="entry name" value="AAA+_ATPase"/>
</dbReference>
<dbReference type="InterPro" id="IPR013765">
    <property type="entry name" value="DNA_recomb/repair_RecA"/>
</dbReference>
<dbReference type="InterPro" id="IPR020584">
    <property type="entry name" value="DNA_recomb/repair_RecA_CS"/>
</dbReference>
<dbReference type="InterPro" id="IPR027417">
    <property type="entry name" value="P-loop_NTPase"/>
</dbReference>
<dbReference type="InterPro" id="IPR049261">
    <property type="entry name" value="RecA-like_C"/>
</dbReference>
<dbReference type="InterPro" id="IPR049428">
    <property type="entry name" value="RecA-like_N"/>
</dbReference>
<dbReference type="InterPro" id="IPR020588">
    <property type="entry name" value="RecA_ATP-bd"/>
</dbReference>
<dbReference type="InterPro" id="IPR023400">
    <property type="entry name" value="RecA_C_sf"/>
</dbReference>
<dbReference type="InterPro" id="IPR020587">
    <property type="entry name" value="RecA_monomer-monomer_interface"/>
</dbReference>
<dbReference type="NCBIfam" id="TIGR02012">
    <property type="entry name" value="tigrfam_recA"/>
    <property type="match status" value="1"/>
</dbReference>
<dbReference type="PANTHER" id="PTHR45900:SF1">
    <property type="entry name" value="MITOCHONDRIAL DNA REPAIR PROTEIN RECA HOMOLOG-RELATED"/>
    <property type="match status" value="1"/>
</dbReference>
<dbReference type="PANTHER" id="PTHR45900">
    <property type="entry name" value="RECA"/>
    <property type="match status" value="1"/>
</dbReference>
<dbReference type="Pfam" id="PF00154">
    <property type="entry name" value="RecA"/>
    <property type="match status" value="1"/>
</dbReference>
<dbReference type="Pfam" id="PF21096">
    <property type="entry name" value="RecA_C"/>
    <property type="match status" value="1"/>
</dbReference>
<dbReference type="PRINTS" id="PR00142">
    <property type="entry name" value="RECA"/>
</dbReference>
<dbReference type="SMART" id="SM00382">
    <property type="entry name" value="AAA"/>
    <property type="match status" value="1"/>
</dbReference>
<dbReference type="SUPFAM" id="SSF52540">
    <property type="entry name" value="P-loop containing nucleoside triphosphate hydrolases"/>
    <property type="match status" value="1"/>
</dbReference>
<dbReference type="SUPFAM" id="SSF54752">
    <property type="entry name" value="RecA protein, C-terminal domain"/>
    <property type="match status" value="1"/>
</dbReference>
<dbReference type="PROSITE" id="PS00321">
    <property type="entry name" value="RECA_1"/>
    <property type="match status" value="1"/>
</dbReference>
<dbReference type="PROSITE" id="PS50162">
    <property type="entry name" value="RECA_2"/>
    <property type="match status" value="1"/>
</dbReference>
<dbReference type="PROSITE" id="PS50163">
    <property type="entry name" value="RECA_3"/>
    <property type="match status" value="1"/>
</dbReference>
<feature type="chain" id="PRO_1000204717" description="Protein RecA">
    <location>
        <begin position="1"/>
        <end position="342"/>
    </location>
</feature>
<feature type="binding site" evidence="1">
    <location>
        <begin position="65"/>
        <end position="72"/>
    </location>
    <ligand>
        <name>ATP</name>
        <dbReference type="ChEBI" id="CHEBI:30616"/>
    </ligand>
</feature>
<keyword id="KW-0067">ATP-binding</keyword>
<keyword id="KW-0963">Cytoplasm</keyword>
<keyword id="KW-0227">DNA damage</keyword>
<keyword id="KW-0233">DNA recombination</keyword>
<keyword id="KW-0234">DNA repair</keyword>
<keyword id="KW-0238">DNA-binding</keyword>
<keyword id="KW-0547">Nucleotide-binding</keyword>
<keyword id="KW-1185">Reference proteome</keyword>
<keyword id="KW-0742">SOS response</keyword>
<evidence type="ECO:0000255" key="1">
    <source>
        <dbReference type="HAMAP-Rule" id="MF_00268"/>
    </source>
</evidence>
<name>RECA_TERTT</name>
<sequence>MDANKEKALQAALQQIDRQFGKGTVMRMGDKELEAIPAVSTGSLGLDVALGIGGLPKGRIVEIYGPESSGKTTLTLQVIAEAQRKGGTCAFVDAEHALDPIYAAKLGVNVDDLIVSQPDTGEQALEVADMLVRSGAIDVLVVDSVAALTPKAEIEGEMGDHHVGLQARLMSQALRKITGNIKNANCLAIFINQIRMKIGVMFGNPETTTGGNALKFYSSVRLDIRRIGSVKDGDEVIGSETRVKVVKNKVAPPFKQTEFQILYGTGINRLGEVIDYGVKLGLIDKAGAWYSYNGDKIGQGKNNAIQYLREHSDVAQTLEDRLKAELLGQSFDEAVEAEAESE</sequence>
<reference key="1">
    <citation type="journal article" date="2009" name="PLoS ONE">
        <title>The complete genome of Teredinibacter turnerae T7901: an intracellular endosymbiont of marine wood-boring bivalves (shipworms).</title>
        <authorList>
            <person name="Yang J.C."/>
            <person name="Madupu R."/>
            <person name="Durkin A.S."/>
            <person name="Ekborg N.A."/>
            <person name="Pedamallu C.S."/>
            <person name="Hostetler J.B."/>
            <person name="Radune D."/>
            <person name="Toms B.S."/>
            <person name="Henrissat B."/>
            <person name="Coutinho P.M."/>
            <person name="Schwarz S."/>
            <person name="Field L."/>
            <person name="Trindade-Silva A.E."/>
            <person name="Soares C.A.G."/>
            <person name="Elshahawi S."/>
            <person name="Hanora A."/>
            <person name="Schmidt E.W."/>
            <person name="Haygood M.G."/>
            <person name="Posfai J."/>
            <person name="Benner J."/>
            <person name="Madinger C."/>
            <person name="Nove J."/>
            <person name="Anton B."/>
            <person name="Chaudhary K."/>
            <person name="Foster J."/>
            <person name="Holman A."/>
            <person name="Kumar S."/>
            <person name="Lessard P.A."/>
            <person name="Luyten Y.A."/>
            <person name="Slatko B."/>
            <person name="Wood N."/>
            <person name="Wu B."/>
            <person name="Teplitski M."/>
            <person name="Mougous J.D."/>
            <person name="Ward N."/>
            <person name="Eisen J.A."/>
            <person name="Badger J.H."/>
            <person name="Distel D.L."/>
        </authorList>
    </citation>
    <scope>NUCLEOTIDE SEQUENCE [LARGE SCALE GENOMIC DNA]</scope>
    <source>
        <strain>ATCC 39867 / T7901</strain>
    </source>
</reference>